<dbReference type="EMBL" id="X93587">
    <property type="protein sequence ID" value="CAA63786.1"/>
    <property type="molecule type" value="mRNA"/>
</dbReference>
<dbReference type="SMR" id="P50345"/>
<dbReference type="GO" id="GO:0022625">
    <property type="term" value="C:cytosolic large ribosomal subunit"/>
    <property type="evidence" value="ECO:0007669"/>
    <property type="project" value="TreeGrafter"/>
</dbReference>
<dbReference type="GO" id="GO:0070180">
    <property type="term" value="F:large ribosomal subunit rRNA binding"/>
    <property type="evidence" value="ECO:0007669"/>
    <property type="project" value="TreeGrafter"/>
</dbReference>
<dbReference type="GO" id="GO:0003735">
    <property type="term" value="F:structural constituent of ribosome"/>
    <property type="evidence" value="ECO:0007669"/>
    <property type="project" value="TreeGrafter"/>
</dbReference>
<dbReference type="GO" id="GO:0002181">
    <property type="term" value="P:cytoplasmic translation"/>
    <property type="evidence" value="ECO:0007669"/>
    <property type="project" value="TreeGrafter"/>
</dbReference>
<dbReference type="GO" id="GO:0000027">
    <property type="term" value="P:ribosomal large subunit assembly"/>
    <property type="evidence" value="ECO:0007669"/>
    <property type="project" value="TreeGrafter"/>
</dbReference>
<dbReference type="CDD" id="cd05795">
    <property type="entry name" value="Ribosomal_P0_L10e"/>
    <property type="match status" value="1"/>
</dbReference>
<dbReference type="FunFam" id="3.90.105.20:FF:000001">
    <property type="entry name" value="60S acidic ribosomal protein P0"/>
    <property type="match status" value="1"/>
</dbReference>
<dbReference type="Gene3D" id="3.30.70.1730">
    <property type="match status" value="1"/>
</dbReference>
<dbReference type="Gene3D" id="3.90.105.20">
    <property type="match status" value="1"/>
</dbReference>
<dbReference type="InterPro" id="IPR050323">
    <property type="entry name" value="Ribosomal_protein_uL10"/>
</dbReference>
<dbReference type="InterPro" id="IPR001790">
    <property type="entry name" value="Ribosomal_uL10"/>
</dbReference>
<dbReference type="InterPro" id="IPR040637">
    <property type="entry name" value="Ribosomal_uL10-like_insert"/>
</dbReference>
<dbReference type="InterPro" id="IPR043164">
    <property type="entry name" value="Ribosomal_uL10-like_insert_sf"/>
</dbReference>
<dbReference type="InterPro" id="IPR043141">
    <property type="entry name" value="Ribosomal_uL10-like_sf"/>
</dbReference>
<dbReference type="InterPro" id="IPR030670">
    <property type="entry name" value="uL10_eukaryotes"/>
</dbReference>
<dbReference type="PANTHER" id="PTHR45699">
    <property type="entry name" value="60S ACIDIC RIBOSOMAL PROTEIN P0"/>
    <property type="match status" value="1"/>
</dbReference>
<dbReference type="PANTHER" id="PTHR45699:SF3">
    <property type="entry name" value="LARGE RIBOSOMAL SUBUNIT PROTEIN UL10"/>
    <property type="match status" value="1"/>
</dbReference>
<dbReference type="Pfam" id="PF00428">
    <property type="entry name" value="Ribosomal_60s"/>
    <property type="match status" value="1"/>
</dbReference>
<dbReference type="Pfam" id="PF00466">
    <property type="entry name" value="Ribosomal_L10"/>
    <property type="match status" value="1"/>
</dbReference>
<dbReference type="Pfam" id="PF17777">
    <property type="entry name" value="RL10P_insert"/>
    <property type="match status" value="1"/>
</dbReference>
<dbReference type="PIRSF" id="PIRSF039087">
    <property type="entry name" value="L10E"/>
    <property type="match status" value="1"/>
</dbReference>
<dbReference type="SUPFAM" id="SSF160369">
    <property type="entry name" value="Ribosomal protein L10-like"/>
    <property type="match status" value="1"/>
</dbReference>
<sequence>MAPKATKAEKKIVYDGKLCQLLDEYTQILVVNADNVGSKQLQNIRQGLRGDSVVLMGKNTMMKRSVRIHAEKTGNQAFLNLIPLLIGNVGLIFTKGYLKEVSEEVAKYKVGAPACVGLVAPIDVVVPPGNTGLDPSQTSFFQVLNIPTKINKGTVEIITPVELIKKGDKVGSSEAALLAKLGIRPFSYGLVVLSVYDNGSVFKPEVLDLTEDDLLEKFAIGVSQCYFSDTSHFIPNPSAAPHVFINAYKNVLAVAVATEYSFPQADEVKEYLKDPSKFAAVAAAAAPAADSGAAPAAAAKAEKEEEPAEESDDEMGFGLFDE</sequence>
<organism>
    <name type="scientific">Lupinus luteus</name>
    <name type="common">European yellow lupine</name>
    <dbReference type="NCBI Taxonomy" id="3873"/>
    <lineage>
        <taxon>Eukaryota</taxon>
        <taxon>Viridiplantae</taxon>
        <taxon>Streptophyta</taxon>
        <taxon>Embryophyta</taxon>
        <taxon>Tracheophyta</taxon>
        <taxon>Spermatophyta</taxon>
        <taxon>Magnoliopsida</taxon>
        <taxon>eudicotyledons</taxon>
        <taxon>Gunneridae</taxon>
        <taxon>Pentapetalae</taxon>
        <taxon>rosids</taxon>
        <taxon>fabids</taxon>
        <taxon>Fabales</taxon>
        <taxon>Fabaceae</taxon>
        <taxon>Papilionoideae</taxon>
        <taxon>50 kb inversion clade</taxon>
        <taxon>genistoids sensu lato</taxon>
        <taxon>core genistoids</taxon>
        <taxon>Genisteae</taxon>
        <taxon>Lupinus</taxon>
    </lineage>
</organism>
<keyword id="KW-0597">Phosphoprotein</keyword>
<keyword id="KW-0687">Ribonucleoprotein</keyword>
<keyword id="KW-0689">Ribosomal protein</keyword>
<protein>
    <recommendedName>
        <fullName evidence="3">Large ribosomal subunit protein uL10</fullName>
    </recommendedName>
    <alternativeName>
        <fullName>60S acidic ribosomal protein P0</fullName>
    </alternativeName>
</protein>
<feature type="chain" id="PRO_0000154779" description="Large ribosomal subunit protein uL10">
    <location>
        <begin position="1"/>
        <end position="322"/>
    </location>
</feature>
<feature type="region of interest" description="Disordered" evidence="2">
    <location>
        <begin position="294"/>
        <end position="322"/>
    </location>
</feature>
<feature type="compositionally biased region" description="Acidic residues" evidence="2">
    <location>
        <begin position="304"/>
        <end position="322"/>
    </location>
</feature>
<accession>P50345</accession>
<reference key="1">
    <citation type="journal article" date="1998" name="Biochem. Mol. Biol. Int.">
        <title>Expression of the cDNA and purification of P0 ribosomal protein from Lupinus luteus.</title>
        <authorList>
            <person name="Mikolajczyk K."/>
            <person name="Barciszewski J."/>
        </authorList>
    </citation>
    <scope>NUCLEOTIDE SEQUENCE [MRNA]</scope>
    <source>
        <strain>cv. Ventus</strain>
    </source>
</reference>
<name>RLA0_LUPLU</name>
<evidence type="ECO:0000250" key="1"/>
<evidence type="ECO:0000256" key="2">
    <source>
        <dbReference type="SAM" id="MobiDB-lite"/>
    </source>
</evidence>
<evidence type="ECO:0000305" key="3"/>
<comment type="function">
    <text>Ribosomal protein P0 is the functional equivalent of E.coli protein L10.</text>
</comment>
<comment type="subunit">
    <text evidence="1">P0 forms a pentameric complex by interaction with dimers of P1 and P2.</text>
</comment>
<comment type="PTM">
    <text evidence="1">Phosphorylated.</text>
</comment>
<comment type="similarity">
    <text evidence="3">Belongs to the universal ribosomal protein uL10 family.</text>
</comment>
<proteinExistence type="evidence at transcript level"/>